<proteinExistence type="inferred from homology"/>
<gene>
    <name evidence="1" type="primary">murG</name>
    <name type="ordered locus">Mchl_3168</name>
</gene>
<protein>
    <recommendedName>
        <fullName evidence="1">UDP-N-acetylglucosamine--N-acetylmuramyl-(pentapeptide) pyrophosphoryl-undecaprenol N-acetylglucosamine transferase</fullName>
        <ecNumber evidence="1">2.4.1.227</ecNumber>
    </recommendedName>
    <alternativeName>
        <fullName evidence="1">Undecaprenyl-PP-MurNAc-pentapeptide-UDPGlcNAc GlcNAc transferase</fullName>
    </alternativeName>
</protein>
<evidence type="ECO:0000255" key="1">
    <source>
        <dbReference type="HAMAP-Rule" id="MF_00033"/>
    </source>
</evidence>
<comment type="function">
    <text evidence="1">Cell wall formation. Catalyzes the transfer of a GlcNAc subunit on undecaprenyl-pyrophosphoryl-MurNAc-pentapeptide (lipid intermediate I) to form undecaprenyl-pyrophosphoryl-MurNAc-(pentapeptide)GlcNAc (lipid intermediate II).</text>
</comment>
<comment type="catalytic activity">
    <reaction evidence="1">
        <text>di-trans,octa-cis-undecaprenyl diphospho-N-acetyl-alpha-D-muramoyl-L-alanyl-D-glutamyl-meso-2,6-diaminopimeloyl-D-alanyl-D-alanine + UDP-N-acetyl-alpha-D-glucosamine = di-trans,octa-cis-undecaprenyl diphospho-[N-acetyl-alpha-D-glucosaminyl-(1-&gt;4)]-N-acetyl-alpha-D-muramoyl-L-alanyl-D-glutamyl-meso-2,6-diaminopimeloyl-D-alanyl-D-alanine + UDP + H(+)</text>
        <dbReference type="Rhea" id="RHEA:31227"/>
        <dbReference type="ChEBI" id="CHEBI:15378"/>
        <dbReference type="ChEBI" id="CHEBI:57705"/>
        <dbReference type="ChEBI" id="CHEBI:58223"/>
        <dbReference type="ChEBI" id="CHEBI:61387"/>
        <dbReference type="ChEBI" id="CHEBI:61388"/>
        <dbReference type="EC" id="2.4.1.227"/>
    </reaction>
</comment>
<comment type="pathway">
    <text evidence="1">Cell wall biogenesis; peptidoglycan biosynthesis.</text>
</comment>
<comment type="subcellular location">
    <subcellularLocation>
        <location evidence="1">Cell inner membrane</location>
        <topology evidence="1">Peripheral membrane protein</topology>
        <orientation evidence="1">Cytoplasmic side</orientation>
    </subcellularLocation>
</comment>
<comment type="similarity">
    <text evidence="1">Belongs to the glycosyltransferase 28 family. MurG subfamily.</text>
</comment>
<organism>
    <name type="scientific">Methylorubrum extorquens (strain CM4 / NCIMB 13688)</name>
    <name type="common">Methylobacterium extorquens</name>
    <dbReference type="NCBI Taxonomy" id="440085"/>
    <lineage>
        <taxon>Bacteria</taxon>
        <taxon>Pseudomonadati</taxon>
        <taxon>Pseudomonadota</taxon>
        <taxon>Alphaproteobacteria</taxon>
        <taxon>Hyphomicrobiales</taxon>
        <taxon>Methylobacteriaceae</taxon>
        <taxon>Methylorubrum</taxon>
    </lineage>
</organism>
<accession>B7KSC1</accession>
<reference key="1">
    <citation type="submission" date="2008-12" db="EMBL/GenBank/DDBJ databases">
        <title>Complete sequence of chromosome of Methylobacterium chloromethanicum CM4.</title>
        <authorList>
            <consortium name="US DOE Joint Genome Institute"/>
            <person name="Lucas S."/>
            <person name="Copeland A."/>
            <person name="Lapidus A."/>
            <person name="Glavina del Rio T."/>
            <person name="Dalin E."/>
            <person name="Tice H."/>
            <person name="Bruce D."/>
            <person name="Goodwin L."/>
            <person name="Pitluck S."/>
            <person name="Chertkov O."/>
            <person name="Brettin T."/>
            <person name="Detter J.C."/>
            <person name="Han C."/>
            <person name="Larimer F."/>
            <person name="Land M."/>
            <person name="Hauser L."/>
            <person name="Kyrpides N."/>
            <person name="Mikhailova N."/>
            <person name="Marx C."/>
            <person name="Richardson P."/>
        </authorList>
    </citation>
    <scope>NUCLEOTIDE SEQUENCE [LARGE SCALE GENOMIC DNA]</scope>
    <source>
        <strain>CM4 / NCIMB 13688</strain>
    </source>
</reference>
<sequence length="369" mass="38129">MTVFTPLVLVCAGGTGGHLFPAQSLAYALKDRGIRVALATDARVDSIAGDFPAEEIVTIASATPSGRSVLRRAGAVVTLGRGFGQAARAVRRLNPAAVVGFGGYPTVPPMLAAQLLRVPTILHEQNAVMGRANGFLAKGARVIATGFKEVRGVPEKATARRVHTGNPIRPAVLAVAETPYPSLDADAPLRLLVFGGSQGARVMSEVVPAAIEKLPQDLRARLHLVQQARPEDLTATQNRYLAMGLGGIEAAPFFKDLPGRMASAHLVVARSGASTVSELAAIGRPAILVPLPGALDQDQAANAATLAQIGAALSIPQSAFTPDRLAAELVDLFEAPRKLTQAAAAAKTARILDAADRLAALVAETAAAT</sequence>
<feature type="chain" id="PRO_1000192135" description="UDP-N-acetylglucosamine--N-acetylmuramyl-(pentapeptide) pyrophosphoryl-undecaprenol N-acetylglucosamine transferase">
    <location>
        <begin position="1"/>
        <end position="369"/>
    </location>
</feature>
<feature type="binding site" evidence="1">
    <location>
        <begin position="15"/>
        <end position="17"/>
    </location>
    <ligand>
        <name>UDP-N-acetyl-alpha-D-glucosamine</name>
        <dbReference type="ChEBI" id="CHEBI:57705"/>
    </ligand>
</feature>
<feature type="binding site" evidence="1">
    <location>
        <position position="126"/>
    </location>
    <ligand>
        <name>UDP-N-acetyl-alpha-D-glucosamine</name>
        <dbReference type="ChEBI" id="CHEBI:57705"/>
    </ligand>
</feature>
<feature type="binding site" evidence="1">
    <location>
        <position position="169"/>
    </location>
    <ligand>
        <name>UDP-N-acetyl-alpha-D-glucosamine</name>
        <dbReference type="ChEBI" id="CHEBI:57705"/>
    </ligand>
</feature>
<feature type="binding site" evidence="1">
    <location>
        <position position="197"/>
    </location>
    <ligand>
        <name>UDP-N-acetyl-alpha-D-glucosamine</name>
        <dbReference type="ChEBI" id="CHEBI:57705"/>
    </ligand>
</feature>
<feature type="binding site" evidence="1">
    <location>
        <position position="299"/>
    </location>
    <ligand>
        <name>UDP-N-acetyl-alpha-D-glucosamine</name>
        <dbReference type="ChEBI" id="CHEBI:57705"/>
    </ligand>
</feature>
<keyword id="KW-0131">Cell cycle</keyword>
<keyword id="KW-0132">Cell division</keyword>
<keyword id="KW-0997">Cell inner membrane</keyword>
<keyword id="KW-1003">Cell membrane</keyword>
<keyword id="KW-0133">Cell shape</keyword>
<keyword id="KW-0961">Cell wall biogenesis/degradation</keyword>
<keyword id="KW-0328">Glycosyltransferase</keyword>
<keyword id="KW-0472">Membrane</keyword>
<keyword id="KW-0573">Peptidoglycan synthesis</keyword>
<keyword id="KW-0808">Transferase</keyword>
<dbReference type="EC" id="2.4.1.227" evidence="1"/>
<dbReference type="EMBL" id="CP001298">
    <property type="protein sequence ID" value="ACK84006.1"/>
    <property type="molecule type" value="Genomic_DNA"/>
</dbReference>
<dbReference type="RefSeq" id="WP_015823221.1">
    <property type="nucleotide sequence ID" value="NC_011757.1"/>
</dbReference>
<dbReference type="SMR" id="B7KSC1"/>
<dbReference type="CAZy" id="GT28">
    <property type="family name" value="Glycosyltransferase Family 28"/>
</dbReference>
<dbReference type="GeneID" id="72990587"/>
<dbReference type="KEGG" id="mch:Mchl_3168"/>
<dbReference type="HOGENOM" id="CLU_037404_2_1_5"/>
<dbReference type="UniPathway" id="UPA00219"/>
<dbReference type="Proteomes" id="UP000002385">
    <property type="component" value="Chromosome"/>
</dbReference>
<dbReference type="GO" id="GO:0005886">
    <property type="term" value="C:plasma membrane"/>
    <property type="evidence" value="ECO:0007669"/>
    <property type="project" value="UniProtKB-SubCell"/>
</dbReference>
<dbReference type="GO" id="GO:0051991">
    <property type="term" value="F:UDP-N-acetyl-D-glucosamine:N-acetylmuramoyl-L-alanyl-D-glutamyl-meso-2,6-diaminopimelyl-D-alanyl-D-alanine-diphosphoundecaprenol 4-beta-N-acetylglucosaminlytransferase activity"/>
    <property type="evidence" value="ECO:0007669"/>
    <property type="project" value="RHEA"/>
</dbReference>
<dbReference type="GO" id="GO:0050511">
    <property type="term" value="F:undecaprenyldiphospho-muramoylpentapeptide beta-N-acetylglucosaminyltransferase activity"/>
    <property type="evidence" value="ECO:0007669"/>
    <property type="project" value="UniProtKB-UniRule"/>
</dbReference>
<dbReference type="GO" id="GO:0005975">
    <property type="term" value="P:carbohydrate metabolic process"/>
    <property type="evidence" value="ECO:0007669"/>
    <property type="project" value="InterPro"/>
</dbReference>
<dbReference type="GO" id="GO:0051301">
    <property type="term" value="P:cell division"/>
    <property type="evidence" value="ECO:0007669"/>
    <property type="project" value="UniProtKB-KW"/>
</dbReference>
<dbReference type="GO" id="GO:0071555">
    <property type="term" value="P:cell wall organization"/>
    <property type="evidence" value="ECO:0007669"/>
    <property type="project" value="UniProtKB-KW"/>
</dbReference>
<dbReference type="GO" id="GO:0030259">
    <property type="term" value="P:lipid glycosylation"/>
    <property type="evidence" value="ECO:0007669"/>
    <property type="project" value="UniProtKB-UniRule"/>
</dbReference>
<dbReference type="GO" id="GO:0009252">
    <property type="term" value="P:peptidoglycan biosynthetic process"/>
    <property type="evidence" value="ECO:0007669"/>
    <property type="project" value="UniProtKB-UniRule"/>
</dbReference>
<dbReference type="GO" id="GO:0008360">
    <property type="term" value="P:regulation of cell shape"/>
    <property type="evidence" value="ECO:0007669"/>
    <property type="project" value="UniProtKB-KW"/>
</dbReference>
<dbReference type="CDD" id="cd03785">
    <property type="entry name" value="GT28_MurG"/>
    <property type="match status" value="1"/>
</dbReference>
<dbReference type="Gene3D" id="3.40.50.2000">
    <property type="entry name" value="Glycogen Phosphorylase B"/>
    <property type="match status" value="2"/>
</dbReference>
<dbReference type="HAMAP" id="MF_00033">
    <property type="entry name" value="MurG"/>
    <property type="match status" value="1"/>
</dbReference>
<dbReference type="InterPro" id="IPR006009">
    <property type="entry name" value="GlcNAc_MurG"/>
</dbReference>
<dbReference type="InterPro" id="IPR007235">
    <property type="entry name" value="Glyco_trans_28_C"/>
</dbReference>
<dbReference type="InterPro" id="IPR004276">
    <property type="entry name" value="GlycoTrans_28_N"/>
</dbReference>
<dbReference type="NCBIfam" id="TIGR01133">
    <property type="entry name" value="murG"/>
    <property type="match status" value="1"/>
</dbReference>
<dbReference type="PANTHER" id="PTHR21015:SF22">
    <property type="entry name" value="GLYCOSYLTRANSFERASE"/>
    <property type="match status" value="1"/>
</dbReference>
<dbReference type="PANTHER" id="PTHR21015">
    <property type="entry name" value="UDP-N-ACETYLGLUCOSAMINE--N-ACETYLMURAMYL-(PENTAPEPTIDE) PYROPHOSPHORYL-UNDECAPRENOL N-ACETYLGLUCOSAMINE TRANSFERASE 1"/>
    <property type="match status" value="1"/>
</dbReference>
<dbReference type="Pfam" id="PF04101">
    <property type="entry name" value="Glyco_tran_28_C"/>
    <property type="match status" value="1"/>
</dbReference>
<dbReference type="Pfam" id="PF03033">
    <property type="entry name" value="Glyco_transf_28"/>
    <property type="match status" value="1"/>
</dbReference>
<dbReference type="SUPFAM" id="SSF53756">
    <property type="entry name" value="UDP-Glycosyltransferase/glycogen phosphorylase"/>
    <property type="match status" value="1"/>
</dbReference>
<name>MURG_METC4</name>